<accession>B1YJV2</accession>
<feature type="chain" id="PRO_1000093136" description="Glutamyl-tRNA reductase">
    <location>
        <begin position="1"/>
        <end position="446"/>
    </location>
</feature>
<feature type="active site" description="Nucleophile" evidence="1">
    <location>
        <position position="50"/>
    </location>
</feature>
<feature type="binding site" evidence="1">
    <location>
        <begin position="49"/>
        <end position="52"/>
    </location>
    <ligand>
        <name>substrate</name>
    </ligand>
</feature>
<feature type="binding site" evidence="1">
    <location>
        <position position="109"/>
    </location>
    <ligand>
        <name>substrate</name>
    </ligand>
</feature>
<feature type="binding site" evidence="1">
    <location>
        <begin position="114"/>
        <end position="116"/>
    </location>
    <ligand>
        <name>substrate</name>
    </ligand>
</feature>
<feature type="binding site" evidence="1">
    <location>
        <position position="120"/>
    </location>
    <ligand>
        <name>substrate</name>
    </ligand>
</feature>
<feature type="binding site" evidence="1">
    <location>
        <begin position="189"/>
        <end position="194"/>
    </location>
    <ligand>
        <name>NADP(+)</name>
        <dbReference type="ChEBI" id="CHEBI:58349"/>
    </ligand>
</feature>
<feature type="site" description="Important for activity" evidence="1">
    <location>
        <position position="99"/>
    </location>
</feature>
<name>HEM1_EXIS2</name>
<gene>
    <name evidence="1" type="primary">hemA</name>
    <name type="ordered locus">Exig_2138</name>
</gene>
<evidence type="ECO:0000255" key="1">
    <source>
        <dbReference type="HAMAP-Rule" id="MF_00087"/>
    </source>
</evidence>
<comment type="function">
    <text evidence="1">Catalyzes the NADPH-dependent reduction of glutamyl-tRNA(Glu) to glutamate 1-semialdehyde (GSA).</text>
</comment>
<comment type="catalytic activity">
    <reaction evidence="1">
        <text>(S)-4-amino-5-oxopentanoate + tRNA(Glu) + NADP(+) = L-glutamyl-tRNA(Glu) + NADPH + H(+)</text>
        <dbReference type="Rhea" id="RHEA:12344"/>
        <dbReference type="Rhea" id="RHEA-COMP:9663"/>
        <dbReference type="Rhea" id="RHEA-COMP:9680"/>
        <dbReference type="ChEBI" id="CHEBI:15378"/>
        <dbReference type="ChEBI" id="CHEBI:57501"/>
        <dbReference type="ChEBI" id="CHEBI:57783"/>
        <dbReference type="ChEBI" id="CHEBI:58349"/>
        <dbReference type="ChEBI" id="CHEBI:78442"/>
        <dbReference type="ChEBI" id="CHEBI:78520"/>
        <dbReference type="EC" id="1.2.1.70"/>
    </reaction>
</comment>
<comment type="pathway">
    <text evidence="1">Porphyrin-containing compound metabolism; protoporphyrin-IX biosynthesis; 5-aminolevulinate from L-glutamyl-tRNA(Glu): step 1/2.</text>
</comment>
<comment type="subunit">
    <text evidence="1">Homodimer.</text>
</comment>
<comment type="domain">
    <text evidence="1">Possesses an unusual extended V-shaped dimeric structure with each monomer consisting of three distinct domains arranged along a curved 'spinal' alpha-helix. The N-terminal catalytic domain specifically recognizes the glutamate moiety of the substrate. The second domain is the NADPH-binding domain, and the third C-terminal domain is responsible for dimerization.</text>
</comment>
<comment type="miscellaneous">
    <text evidence="1">During catalysis, the active site Cys acts as a nucleophile attacking the alpha-carbonyl group of tRNA-bound glutamate with the formation of a thioester intermediate between enzyme and glutamate, and the concomitant release of tRNA(Glu). The thioester intermediate is finally reduced by direct hydride transfer from NADPH, to form the product GSA.</text>
</comment>
<comment type="similarity">
    <text evidence="1">Belongs to the glutamyl-tRNA reductase family.</text>
</comment>
<organism>
    <name type="scientific">Exiguobacterium sibiricum (strain DSM 17290 / CCUG 55495 / CIP 109462 / JCM 13490 / 255-15)</name>
    <dbReference type="NCBI Taxonomy" id="262543"/>
    <lineage>
        <taxon>Bacteria</taxon>
        <taxon>Bacillati</taxon>
        <taxon>Bacillota</taxon>
        <taxon>Bacilli</taxon>
        <taxon>Bacillales</taxon>
        <taxon>Bacillales Family XII. Incertae Sedis</taxon>
        <taxon>Exiguobacterium</taxon>
    </lineage>
</organism>
<sequence length="446" mass="49612">MHIVVVGLNNKTAPVSIREQVSFGEHEMKGAVVALRDEKSIFESVIVSTCNRTELYVVTDQPHTGRYYTKRFLANWFGLTMEELEPYLFIHEGFDAMKHLFRVTSGLDSMIVGETQILGQVKTSFFTAQKLETTGTVFNKLFKEAVTLAKRAHAETGIGENAVSVSAAAVTLAEQLLGSLEDKSIVVIGAGETGELTTLNLYEAGARDITVFNRTLAKAEEVANRFEGSAHSINEMQCGLLRADIVISSTGAKRAIIKREDIAAAQLFRSDRPFLLIDIAVPRDIEPTAGDLPGVHLYDVDDLTSIVQQNMAERMKEAAKIERRIEAAIAEFEGWMTTLGVVPIITELRDQSLKIQQETMQSLERKLPNMTNREKTVIGKHMKSIINQLLREPLSYIKDAAAKPDAEQRIAQFMDTFALDEELFDSAAEEMVLQEETTAERKAVNR</sequence>
<keyword id="KW-0521">NADP</keyword>
<keyword id="KW-0560">Oxidoreductase</keyword>
<keyword id="KW-0627">Porphyrin biosynthesis</keyword>
<keyword id="KW-1185">Reference proteome</keyword>
<protein>
    <recommendedName>
        <fullName evidence="1">Glutamyl-tRNA reductase</fullName>
        <shortName evidence="1">GluTR</shortName>
        <ecNumber evidence="1">1.2.1.70</ecNumber>
    </recommendedName>
</protein>
<reference key="1">
    <citation type="submission" date="2008-04" db="EMBL/GenBank/DDBJ databases">
        <title>Complete sequence of chromosome of Exiguobacterium sibiricum 255-15.</title>
        <authorList>
            <consortium name="US DOE Joint Genome Institute"/>
            <person name="Copeland A."/>
            <person name="Lucas S."/>
            <person name="Lapidus A."/>
            <person name="Glavina del Rio T."/>
            <person name="Dalin E."/>
            <person name="Tice H."/>
            <person name="Bruce D."/>
            <person name="Goodwin L."/>
            <person name="Pitluck S."/>
            <person name="Kiss H."/>
            <person name="Chertkov O."/>
            <person name="Monk C."/>
            <person name="Brettin T."/>
            <person name="Detter J.C."/>
            <person name="Han C."/>
            <person name="Kuske C.R."/>
            <person name="Schmutz J."/>
            <person name="Larimer F."/>
            <person name="Land M."/>
            <person name="Hauser L."/>
            <person name="Kyrpides N."/>
            <person name="Mikhailova N."/>
            <person name="Vishnivetskaya T."/>
            <person name="Rodrigues D.F."/>
            <person name="Gilichinsky D."/>
            <person name="Tiedje J."/>
            <person name="Richardson P."/>
        </authorList>
    </citation>
    <scope>NUCLEOTIDE SEQUENCE [LARGE SCALE GENOMIC DNA]</scope>
    <source>
        <strain>DSM 17290 / CCUG 55495 / CIP 109462 / JCM 13490 / 255-15</strain>
    </source>
</reference>
<dbReference type="EC" id="1.2.1.70" evidence="1"/>
<dbReference type="EMBL" id="CP001022">
    <property type="protein sequence ID" value="ACB61590.1"/>
    <property type="molecule type" value="Genomic_DNA"/>
</dbReference>
<dbReference type="RefSeq" id="WP_012371007.1">
    <property type="nucleotide sequence ID" value="NC_010556.1"/>
</dbReference>
<dbReference type="SMR" id="B1YJV2"/>
<dbReference type="STRING" id="262543.Exig_2138"/>
<dbReference type="KEGG" id="esi:Exig_2138"/>
<dbReference type="eggNOG" id="COG0373">
    <property type="taxonomic scope" value="Bacteria"/>
</dbReference>
<dbReference type="HOGENOM" id="CLU_035113_2_2_9"/>
<dbReference type="OrthoDB" id="110209at2"/>
<dbReference type="UniPathway" id="UPA00251">
    <property type="reaction ID" value="UER00316"/>
</dbReference>
<dbReference type="Proteomes" id="UP000001681">
    <property type="component" value="Chromosome"/>
</dbReference>
<dbReference type="GO" id="GO:0008883">
    <property type="term" value="F:glutamyl-tRNA reductase activity"/>
    <property type="evidence" value="ECO:0007669"/>
    <property type="project" value="UniProtKB-UniRule"/>
</dbReference>
<dbReference type="GO" id="GO:0050661">
    <property type="term" value="F:NADP binding"/>
    <property type="evidence" value="ECO:0007669"/>
    <property type="project" value="InterPro"/>
</dbReference>
<dbReference type="GO" id="GO:0019353">
    <property type="term" value="P:protoporphyrinogen IX biosynthetic process from glutamate"/>
    <property type="evidence" value="ECO:0007669"/>
    <property type="project" value="TreeGrafter"/>
</dbReference>
<dbReference type="CDD" id="cd05213">
    <property type="entry name" value="NAD_bind_Glutamyl_tRNA_reduct"/>
    <property type="match status" value="1"/>
</dbReference>
<dbReference type="FunFam" id="3.30.460.30:FF:000001">
    <property type="entry name" value="Glutamyl-tRNA reductase"/>
    <property type="match status" value="1"/>
</dbReference>
<dbReference type="FunFam" id="3.40.50.720:FF:000031">
    <property type="entry name" value="Glutamyl-tRNA reductase"/>
    <property type="match status" value="1"/>
</dbReference>
<dbReference type="Gene3D" id="3.30.460.30">
    <property type="entry name" value="Glutamyl-tRNA reductase, N-terminal domain"/>
    <property type="match status" value="1"/>
</dbReference>
<dbReference type="Gene3D" id="3.40.50.720">
    <property type="entry name" value="NAD(P)-binding Rossmann-like Domain"/>
    <property type="match status" value="1"/>
</dbReference>
<dbReference type="HAMAP" id="MF_00087">
    <property type="entry name" value="Glu_tRNA_reductase"/>
    <property type="match status" value="1"/>
</dbReference>
<dbReference type="InterPro" id="IPR000343">
    <property type="entry name" value="4pyrrol_synth_GluRdtase"/>
</dbReference>
<dbReference type="InterPro" id="IPR015896">
    <property type="entry name" value="4pyrrol_synth_GluRdtase_dimer"/>
</dbReference>
<dbReference type="InterPro" id="IPR015895">
    <property type="entry name" value="4pyrrol_synth_GluRdtase_N"/>
</dbReference>
<dbReference type="InterPro" id="IPR018214">
    <property type="entry name" value="GluRdtase_CS"/>
</dbReference>
<dbReference type="InterPro" id="IPR036453">
    <property type="entry name" value="GluRdtase_dimer_dom_sf"/>
</dbReference>
<dbReference type="InterPro" id="IPR036343">
    <property type="entry name" value="GluRdtase_N_sf"/>
</dbReference>
<dbReference type="InterPro" id="IPR036291">
    <property type="entry name" value="NAD(P)-bd_dom_sf"/>
</dbReference>
<dbReference type="InterPro" id="IPR006151">
    <property type="entry name" value="Shikm_DH/Glu-tRNA_Rdtase"/>
</dbReference>
<dbReference type="NCBIfam" id="TIGR01035">
    <property type="entry name" value="hemA"/>
    <property type="match status" value="1"/>
</dbReference>
<dbReference type="PANTHER" id="PTHR43013">
    <property type="entry name" value="GLUTAMYL-TRNA REDUCTASE"/>
    <property type="match status" value="1"/>
</dbReference>
<dbReference type="PANTHER" id="PTHR43013:SF1">
    <property type="entry name" value="GLUTAMYL-TRNA REDUCTASE"/>
    <property type="match status" value="1"/>
</dbReference>
<dbReference type="Pfam" id="PF00745">
    <property type="entry name" value="GlutR_dimer"/>
    <property type="match status" value="1"/>
</dbReference>
<dbReference type="Pfam" id="PF05201">
    <property type="entry name" value="GlutR_N"/>
    <property type="match status" value="1"/>
</dbReference>
<dbReference type="Pfam" id="PF01488">
    <property type="entry name" value="Shikimate_DH"/>
    <property type="match status" value="1"/>
</dbReference>
<dbReference type="PIRSF" id="PIRSF000445">
    <property type="entry name" value="4pyrrol_synth_GluRdtase"/>
    <property type="match status" value="1"/>
</dbReference>
<dbReference type="SUPFAM" id="SSF69742">
    <property type="entry name" value="Glutamyl tRNA-reductase catalytic, N-terminal domain"/>
    <property type="match status" value="1"/>
</dbReference>
<dbReference type="SUPFAM" id="SSF69075">
    <property type="entry name" value="Glutamyl tRNA-reductase dimerization domain"/>
    <property type="match status" value="1"/>
</dbReference>
<dbReference type="SUPFAM" id="SSF51735">
    <property type="entry name" value="NAD(P)-binding Rossmann-fold domains"/>
    <property type="match status" value="1"/>
</dbReference>
<dbReference type="PROSITE" id="PS00747">
    <property type="entry name" value="GLUTR"/>
    <property type="match status" value="1"/>
</dbReference>
<proteinExistence type="inferred from homology"/>